<organism>
    <name type="scientific">Arabidopsis thaliana</name>
    <name type="common">Mouse-ear cress</name>
    <dbReference type="NCBI Taxonomy" id="3702"/>
    <lineage>
        <taxon>Eukaryota</taxon>
        <taxon>Viridiplantae</taxon>
        <taxon>Streptophyta</taxon>
        <taxon>Embryophyta</taxon>
        <taxon>Tracheophyta</taxon>
        <taxon>Spermatophyta</taxon>
        <taxon>Magnoliopsida</taxon>
        <taxon>eudicotyledons</taxon>
        <taxon>Gunneridae</taxon>
        <taxon>Pentapetalae</taxon>
        <taxon>rosids</taxon>
        <taxon>malvids</taxon>
        <taxon>Brassicales</taxon>
        <taxon>Brassicaceae</taxon>
        <taxon>Camelineae</taxon>
        <taxon>Arabidopsis</taxon>
    </lineage>
</organism>
<feature type="signal peptide" evidence="3">
    <location>
        <begin position="1"/>
        <end position="20"/>
    </location>
</feature>
<feature type="chain" id="PRO_0000431269" description="Transmembrane 9 superfamily member 12" evidence="3">
    <location>
        <begin position="21"/>
        <end position="652"/>
    </location>
</feature>
<feature type="topological domain" description="Lumenal" evidence="6">
    <location>
        <begin position="21"/>
        <end position="286"/>
    </location>
</feature>
<feature type="transmembrane region" description="Helical; Name=1" evidence="3">
    <location>
        <begin position="287"/>
        <end position="307"/>
    </location>
</feature>
<feature type="topological domain" description="Cytoplasmic" evidence="6">
    <location>
        <begin position="308"/>
        <end position="362"/>
    </location>
</feature>
<feature type="transmembrane region" description="Helical; Name=2" evidence="3">
    <location>
        <begin position="363"/>
        <end position="383"/>
    </location>
</feature>
<feature type="topological domain" description="Lumenal" evidence="6">
    <location>
        <begin position="384"/>
        <end position="386"/>
    </location>
</feature>
<feature type="transmembrane region" description="Helical; Name=3" evidence="3">
    <location>
        <begin position="387"/>
        <end position="407"/>
    </location>
</feature>
<feature type="topological domain" description="Cytoplasmic" evidence="6">
    <location>
        <begin position="408"/>
        <end position="426"/>
    </location>
</feature>
<feature type="transmembrane region" description="Helical; Name=4" evidence="3">
    <location>
        <begin position="427"/>
        <end position="447"/>
    </location>
</feature>
<feature type="topological domain" description="Lumenal" evidence="6">
    <location>
        <begin position="448"/>
        <end position="460"/>
    </location>
</feature>
<feature type="transmembrane region" description="Helical; Name=5" evidence="3">
    <location>
        <begin position="461"/>
        <end position="481"/>
    </location>
</feature>
<feature type="topological domain" description="Cytoplasmic" evidence="6">
    <location>
        <begin position="482"/>
        <end position="510"/>
    </location>
</feature>
<feature type="transmembrane region" description="Helical; Name=6" evidence="3">
    <location>
        <begin position="511"/>
        <end position="531"/>
    </location>
</feature>
<feature type="topological domain" description="Lumenal" evidence="6">
    <location>
        <begin position="532"/>
        <end position="541"/>
    </location>
</feature>
<feature type="transmembrane region" description="Helical; Name=7" evidence="3">
    <location>
        <begin position="542"/>
        <end position="562"/>
    </location>
</feature>
<feature type="topological domain" description="Cytoplasmic" evidence="6">
    <location>
        <begin position="563"/>
        <end position="580"/>
    </location>
</feature>
<feature type="transmembrane region" description="Helical; Name=8" evidence="3">
    <location>
        <begin position="581"/>
        <end position="601"/>
    </location>
</feature>
<feature type="topological domain" description="Lumenal" evidence="6">
    <location>
        <begin position="602"/>
        <end position="613"/>
    </location>
</feature>
<feature type="transmembrane region" description="Helical; Name=9" evidence="3">
    <location>
        <begin position="614"/>
        <end position="634"/>
    </location>
</feature>
<feature type="topological domain" description="Cytoplasmic" evidence="6">
    <location>
        <begin position="635"/>
        <end position="652"/>
    </location>
</feature>
<feature type="short sequence motif" description="Endoplasmic reticulum export signal" evidence="2">
    <location>
        <begin position="641"/>
        <end position="646"/>
    </location>
</feature>
<feature type="short sequence motif" description="Golgi retention signal" evidence="2">
    <location>
        <begin position="650"/>
        <end position="652"/>
    </location>
</feature>
<feature type="sequence conflict" description="In Ref. 3; BAD43755." ref="3">
    <original>H</original>
    <variation>N</variation>
    <location>
        <position position="568"/>
    </location>
</feature>
<feature type="sequence conflict" description="In Ref. 3; BAD43755." ref="3">
    <original>N</original>
    <variation>Y</variation>
    <location>
        <position position="597"/>
    </location>
</feature>
<keyword id="KW-0967">Endosome</keyword>
<keyword id="KW-0333">Golgi apparatus</keyword>
<keyword id="KW-0472">Membrane</keyword>
<keyword id="KW-1185">Reference proteome</keyword>
<keyword id="KW-0732">Signal</keyword>
<keyword id="KW-0812">Transmembrane</keyword>
<keyword id="KW-1133">Transmembrane helix</keyword>
<evidence type="ECO:0000250" key="1">
    <source>
        <dbReference type="UniProtKB" id="P32802"/>
    </source>
</evidence>
<evidence type="ECO:0000250" key="2">
    <source>
        <dbReference type="UniProtKB" id="Q940G0"/>
    </source>
</evidence>
<evidence type="ECO:0000255" key="3"/>
<evidence type="ECO:0000303" key="4">
    <source>
    </source>
</evidence>
<evidence type="ECO:0000303" key="5">
    <source>
    </source>
</evidence>
<evidence type="ECO:0000305" key="6"/>
<evidence type="ECO:0000312" key="7">
    <source>
        <dbReference type="Araport" id="AT4G12650"/>
    </source>
</evidence>
<evidence type="ECO:0000312" key="8">
    <source>
        <dbReference type="EMBL" id="CAB53758.1"/>
    </source>
</evidence>
<comment type="subcellular location">
    <subcellularLocation>
        <location evidence="1">Endosome membrane</location>
        <topology evidence="3">Multi-pass membrane protein</topology>
    </subcellularLocation>
    <subcellularLocation>
        <location evidence="2">Golgi apparatus membrane</location>
        <topology evidence="3">Multi-pass membrane protein</topology>
    </subcellularLocation>
</comment>
<comment type="domain">
    <text evidence="2">The C-terminal KXD/E motif functions as a Golgi retention signal, certainly through the binding to the COP1 coatomer.</text>
</comment>
<comment type="similarity">
    <text>Belongs to the nonaspanin (TM9SF) (TC 9.A.2) family.</text>
</comment>
<accession>F4JRE0</accession>
<accession>Q67ZI3</accession>
<accession>Q67ZX5</accession>
<accession>Q9SU21</accession>
<sequence>MFGVYRVFVLLVFVSQLCNGFYLPGSYMHTYSDGDSIFAKVNSLTSIETELPFSYYSLPYCQPLEGIKKSAENLGELLMGDQIDNSAYRFRMRTNESLYLCTTSPLNEHEVKLLKQRTRELYQVNMILDNLPALRFAKQNGVTIQWTGYPVGYSPPNSNDDYIINHLKFKVLVHEYEGNVMEVIGTGEEGMGVISEADKKKALGYEIVGFEVVPCSVKYDAEKMTKLHMYDPVPSVNCPLELDKAQIIKEHERITFTYEVEFVKSETRWPSRWDAYLKMEGARVHWFSILNSLMVIFFLAGIVFVIFLRTVRRDLTKYEELDKEAQAQMNEELSGWKLVVGDVFREPEMSKLLCIMVGDGVRITGMAVVTIVFAALGFMSPASRGMLLTGMIILYLFLGIVAGYAGVRLWRTVKGTSEGWRSLSWSIACFFPGIAFVILTVLNFLLWSSNSTGAIPISLYFELLALWFCISVPLTLFGGFLGTRAEAIQFPVRTNQIPREIPERKYPSWLLVLGAGTLPFGTLFIELFFIFSSIWLGRFYYVFGFLLIVLLLLVVVCAEVSVVLTYMHLCVEDWRWWWKAFYASGSVALYVFAYSINYLVFDLQSLSGPVSAMLYIGYSLLMAIAIMLATGTIGFLTSFYFVHYLFSSVKID</sequence>
<reference key="1">
    <citation type="journal article" date="1999" name="Nature">
        <title>Sequence and analysis of chromosome 4 of the plant Arabidopsis thaliana.</title>
        <authorList>
            <person name="Mayer K.F.X."/>
            <person name="Schueller C."/>
            <person name="Wambutt R."/>
            <person name="Murphy G."/>
            <person name="Volckaert G."/>
            <person name="Pohl T."/>
            <person name="Duesterhoeft A."/>
            <person name="Stiekema W."/>
            <person name="Entian K.-D."/>
            <person name="Terryn N."/>
            <person name="Harris B."/>
            <person name="Ansorge W."/>
            <person name="Brandt P."/>
            <person name="Grivell L.A."/>
            <person name="Rieger M."/>
            <person name="Weichselgartner M."/>
            <person name="de Simone V."/>
            <person name="Obermaier B."/>
            <person name="Mache R."/>
            <person name="Mueller M."/>
            <person name="Kreis M."/>
            <person name="Delseny M."/>
            <person name="Puigdomenech P."/>
            <person name="Watson M."/>
            <person name="Schmidtheini T."/>
            <person name="Reichert B."/>
            <person name="Portetelle D."/>
            <person name="Perez-Alonso M."/>
            <person name="Boutry M."/>
            <person name="Bancroft I."/>
            <person name="Vos P."/>
            <person name="Hoheisel J."/>
            <person name="Zimmermann W."/>
            <person name="Wedler H."/>
            <person name="Ridley P."/>
            <person name="Langham S.-A."/>
            <person name="McCullagh B."/>
            <person name="Bilham L."/>
            <person name="Robben J."/>
            <person name="van der Schueren J."/>
            <person name="Grymonprez B."/>
            <person name="Chuang Y.-J."/>
            <person name="Vandenbussche F."/>
            <person name="Braeken M."/>
            <person name="Weltjens I."/>
            <person name="Voet M."/>
            <person name="Bastiaens I."/>
            <person name="Aert R."/>
            <person name="Defoor E."/>
            <person name="Weitzenegger T."/>
            <person name="Bothe G."/>
            <person name="Ramsperger U."/>
            <person name="Hilbert H."/>
            <person name="Braun M."/>
            <person name="Holzer E."/>
            <person name="Brandt A."/>
            <person name="Peters S."/>
            <person name="van Staveren M."/>
            <person name="Dirkse W."/>
            <person name="Mooijman P."/>
            <person name="Klein Lankhorst R."/>
            <person name="Rose M."/>
            <person name="Hauf J."/>
            <person name="Koetter P."/>
            <person name="Berneiser S."/>
            <person name="Hempel S."/>
            <person name="Feldpausch M."/>
            <person name="Lamberth S."/>
            <person name="Van den Daele H."/>
            <person name="De Keyser A."/>
            <person name="Buysshaert C."/>
            <person name="Gielen J."/>
            <person name="Villarroel R."/>
            <person name="De Clercq R."/>
            <person name="van Montagu M."/>
            <person name="Rogers J."/>
            <person name="Cronin A."/>
            <person name="Quail M.A."/>
            <person name="Bray-Allen S."/>
            <person name="Clark L."/>
            <person name="Doggett J."/>
            <person name="Hall S."/>
            <person name="Kay M."/>
            <person name="Lennard N."/>
            <person name="McLay K."/>
            <person name="Mayes R."/>
            <person name="Pettett A."/>
            <person name="Rajandream M.A."/>
            <person name="Lyne M."/>
            <person name="Benes V."/>
            <person name="Rechmann S."/>
            <person name="Borkova D."/>
            <person name="Bloecker H."/>
            <person name="Scharfe M."/>
            <person name="Grimm M."/>
            <person name="Loehnert T.-H."/>
            <person name="Dose S."/>
            <person name="de Haan M."/>
            <person name="Maarse A.C."/>
            <person name="Schaefer M."/>
            <person name="Mueller-Auer S."/>
            <person name="Gabel C."/>
            <person name="Fuchs M."/>
            <person name="Fartmann B."/>
            <person name="Granderath K."/>
            <person name="Dauner D."/>
            <person name="Herzl A."/>
            <person name="Neumann S."/>
            <person name="Argiriou A."/>
            <person name="Vitale D."/>
            <person name="Liguori R."/>
            <person name="Piravandi E."/>
            <person name="Massenet O."/>
            <person name="Quigley F."/>
            <person name="Clabauld G."/>
            <person name="Muendlein A."/>
            <person name="Felber R."/>
            <person name="Schnabl S."/>
            <person name="Hiller R."/>
            <person name="Schmidt W."/>
            <person name="Lecharny A."/>
            <person name="Aubourg S."/>
            <person name="Chefdor F."/>
            <person name="Cooke R."/>
            <person name="Berger C."/>
            <person name="Monfort A."/>
            <person name="Casacuberta E."/>
            <person name="Gibbons T."/>
            <person name="Weber N."/>
            <person name="Vandenbol M."/>
            <person name="Bargues M."/>
            <person name="Terol J."/>
            <person name="Torres A."/>
            <person name="Perez-Perez A."/>
            <person name="Purnelle B."/>
            <person name="Bent E."/>
            <person name="Johnson S."/>
            <person name="Tacon D."/>
            <person name="Jesse T."/>
            <person name="Heijnen L."/>
            <person name="Schwarz S."/>
            <person name="Scholler P."/>
            <person name="Heber S."/>
            <person name="Francs P."/>
            <person name="Bielke C."/>
            <person name="Frishman D."/>
            <person name="Haase D."/>
            <person name="Lemcke K."/>
            <person name="Mewes H.-W."/>
            <person name="Stocker S."/>
            <person name="Zaccaria P."/>
            <person name="Bevan M."/>
            <person name="Wilson R.K."/>
            <person name="de la Bastide M."/>
            <person name="Habermann K."/>
            <person name="Parnell L."/>
            <person name="Dedhia N."/>
            <person name="Gnoj L."/>
            <person name="Schutz K."/>
            <person name="Huang E."/>
            <person name="Spiegel L."/>
            <person name="Sekhon M."/>
            <person name="Murray J."/>
            <person name="Sheet P."/>
            <person name="Cordes M."/>
            <person name="Abu-Threideh J."/>
            <person name="Stoneking T."/>
            <person name="Kalicki J."/>
            <person name="Graves T."/>
            <person name="Harmon G."/>
            <person name="Edwards J."/>
            <person name="Latreille P."/>
            <person name="Courtney L."/>
            <person name="Cloud J."/>
            <person name="Abbott A."/>
            <person name="Scott K."/>
            <person name="Johnson D."/>
            <person name="Minx P."/>
            <person name="Bentley D."/>
            <person name="Fulton B."/>
            <person name="Miller N."/>
            <person name="Greco T."/>
            <person name="Kemp K."/>
            <person name="Kramer J."/>
            <person name="Fulton L."/>
            <person name="Mardis E."/>
            <person name="Dante M."/>
            <person name="Pepin K."/>
            <person name="Hillier L.W."/>
            <person name="Nelson J."/>
            <person name="Spieth J."/>
            <person name="Ryan E."/>
            <person name="Andrews S."/>
            <person name="Geisel C."/>
            <person name="Layman D."/>
            <person name="Du H."/>
            <person name="Ali J."/>
            <person name="Berghoff A."/>
            <person name="Jones K."/>
            <person name="Drone K."/>
            <person name="Cotton M."/>
            <person name="Joshu C."/>
            <person name="Antonoiu B."/>
            <person name="Zidanic M."/>
            <person name="Strong C."/>
            <person name="Sun H."/>
            <person name="Lamar B."/>
            <person name="Yordan C."/>
            <person name="Ma P."/>
            <person name="Zhong J."/>
            <person name="Preston R."/>
            <person name="Vil D."/>
            <person name="Shekher M."/>
            <person name="Matero A."/>
            <person name="Shah R."/>
            <person name="Swaby I.K."/>
            <person name="O'Shaughnessy A."/>
            <person name="Rodriguez M."/>
            <person name="Hoffman J."/>
            <person name="Till S."/>
            <person name="Granat S."/>
            <person name="Shohdy N."/>
            <person name="Hasegawa A."/>
            <person name="Hameed A."/>
            <person name="Lodhi M."/>
            <person name="Johnson A."/>
            <person name="Chen E."/>
            <person name="Marra M.A."/>
            <person name="Martienssen R."/>
            <person name="McCombie W.R."/>
        </authorList>
    </citation>
    <scope>NUCLEOTIDE SEQUENCE [LARGE SCALE GENOMIC DNA]</scope>
    <source>
        <strain>cv. Columbia</strain>
    </source>
</reference>
<reference key="2">
    <citation type="journal article" date="2017" name="Plant J.">
        <title>Araport11: a complete reannotation of the Arabidopsis thaliana reference genome.</title>
        <authorList>
            <person name="Cheng C.Y."/>
            <person name="Krishnakumar V."/>
            <person name="Chan A.P."/>
            <person name="Thibaud-Nissen F."/>
            <person name="Schobel S."/>
            <person name="Town C.D."/>
        </authorList>
    </citation>
    <scope>GENOME REANNOTATION</scope>
    <source>
        <strain>cv. Columbia</strain>
    </source>
</reference>
<reference key="3">
    <citation type="submission" date="2004-09" db="EMBL/GenBank/DDBJ databases">
        <title>Large-scale analysis of RIKEN Arabidopsis full-length (RAFL) cDNAs.</title>
        <authorList>
            <person name="Totoki Y."/>
            <person name="Seki M."/>
            <person name="Ishida J."/>
            <person name="Nakajima M."/>
            <person name="Enju A."/>
            <person name="Kamiya A."/>
            <person name="Narusaka M."/>
            <person name="Shin-i T."/>
            <person name="Nakagawa M."/>
            <person name="Sakamoto N."/>
            <person name="Oishi K."/>
            <person name="Kohara Y."/>
            <person name="Kobayashi M."/>
            <person name="Toyoda A."/>
            <person name="Sakaki Y."/>
            <person name="Sakurai T."/>
            <person name="Iida K."/>
            <person name="Akiyama K."/>
            <person name="Satou M."/>
            <person name="Toyoda T."/>
            <person name="Konagaya A."/>
            <person name="Carninci P."/>
            <person name="Kawai J."/>
            <person name="Hayashizaki Y."/>
            <person name="Shinozaki K."/>
        </authorList>
    </citation>
    <scope>NUCLEOTIDE SEQUENCE [LARGE SCALE MRNA] OF 325-652</scope>
    <source>
        <strain>cv. Columbia</strain>
    </source>
</reference>
<reference key="4">
    <citation type="journal article" date="2010" name="Physiol. Plantarum">
        <title>Transmembrane nine proteins in yeast and Arabidopsis affect cellular metal contents without changing vacuolar morphology.</title>
        <authorList>
            <person name="Hegelund J.N."/>
            <person name="Jahn T.P."/>
            <person name="Baekgaard L."/>
            <person name="Palmgren M.G."/>
            <person name="Schjoerring J.K."/>
        </authorList>
    </citation>
    <scope>GENE FAMILY</scope>
    <scope>NOMENCLATURE</scope>
</reference>
<reference key="5">
    <citation type="journal article" date="2012" name="Plant Cell">
        <title>The Golgi-localized Arabidopsis endomembrane protein12 contains both endoplasmic reticulum export and Golgi retention signals at its C terminus.</title>
        <authorList>
            <person name="Gao C."/>
            <person name="Yu C.K."/>
            <person name="Qu S."/>
            <person name="San M.W."/>
            <person name="Li K.Y."/>
            <person name="Lo S.W."/>
            <person name="Jiang L."/>
        </authorList>
    </citation>
    <scope>GENE FAMILY</scope>
    <scope>NOMENCLATURE</scope>
</reference>
<gene>
    <name evidence="4" type="primary">TMN12</name>
    <name evidence="5" type="synonym">EMP7</name>
    <name evidence="7" type="ordered locus">At4g12650</name>
    <name evidence="8" type="ORF">T1P17.240</name>
</gene>
<proteinExistence type="evidence at transcript level"/>
<name>TMN12_ARATH</name>
<protein>
    <recommendedName>
        <fullName evidence="6">Transmembrane 9 superfamily member 12</fullName>
    </recommendedName>
    <alternativeName>
        <fullName evidence="5">Endomembrane protein 7</fullName>
    </alternativeName>
    <alternativeName>
        <fullName evidence="4">Transmembrane nine protein 12</fullName>
        <shortName evidence="4">AtTMN12</shortName>
    </alternativeName>
</protein>
<dbReference type="EMBL" id="AL049730">
    <property type="protein sequence ID" value="CAB53758.1"/>
    <property type="molecule type" value="Genomic_DNA"/>
</dbReference>
<dbReference type="EMBL" id="AL161534">
    <property type="protein sequence ID" value="CAB78308.1"/>
    <property type="molecule type" value="Genomic_DNA"/>
</dbReference>
<dbReference type="EMBL" id="CP002687">
    <property type="protein sequence ID" value="AEE83160.1"/>
    <property type="molecule type" value="Genomic_DNA"/>
</dbReference>
<dbReference type="EMBL" id="AK175697">
    <property type="protein sequence ID" value="BAD43460.1"/>
    <property type="molecule type" value="mRNA"/>
</dbReference>
<dbReference type="EMBL" id="AK175992">
    <property type="protein sequence ID" value="BAD43755.1"/>
    <property type="molecule type" value="mRNA"/>
</dbReference>
<dbReference type="EMBL" id="AK176134">
    <property type="protein sequence ID" value="BAD43897.1"/>
    <property type="molecule type" value="mRNA"/>
</dbReference>
<dbReference type="PIR" id="H85135">
    <property type="entry name" value="H85135"/>
</dbReference>
<dbReference type="RefSeq" id="NP_001319915.1">
    <property type="nucleotide sequence ID" value="NM_001340796.1"/>
</dbReference>
<dbReference type="SMR" id="F4JRE0"/>
<dbReference type="BioGRID" id="12175">
    <property type="interactions" value="1"/>
</dbReference>
<dbReference type="FunCoup" id="F4JRE0">
    <property type="interactions" value="1229"/>
</dbReference>
<dbReference type="STRING" id="3702.F4JRE0"/>
<dbReference type="PaxDb" id="3702-AT4G12650.1"/>
<dbReference type="ProteomicsDB" id="234439"/>
<dbReference type="EnsemblPlants" id="AT4G12650.1">
    <property type="protein sequence ID" value="AT4G12650.1"/>
    <property type="gene ID" value="AT4G12650"/>
</dbReference>
<dbReference type="GeneID" id="826878"/>
<dbReference type="Gramene" id="AT4G12650.1">
    <property type="protein sequence ID" value="AT4G12650.1"/>
    <property type="gene ID" value="AT4G12650"/>
</dbReference>
<dbReference type="KEGG" id="ath:AT4G12650"/>
<dbReference type="Araport" id="AT4G12650"/>
<dbReference type="TAIR" id="AT4G12650">
    <property type="gene designation" value="TMN12"/>
</dbReference>
<dbReference type="eggNOG" id="KOG1278">
    <property type="taxonomic scope" value="Eukaryota"/>
</dbReference>
<dbReference type="HOGENOM" id="CLU_010714_4_1_1"/>
<dbReference type="InParanoid" id="F4JRE0"/>
<dbReference type="OMA" id="RWWWIAY"/>
<dbReference type="CD-CODE" id="4299E36E">
    <property type="entry name" value="Nucleolus"/>
</dbReference>
<dbReference type="PRO" id="PR:F4JRE0"/>
<dbReference type="Proteomes" id="UP000006548">
    <property type="component" value="Chromosome 4"/>
</dbReference>
<dbReference type="ExpressionAtlas" id="F4JRE0">
    <property type="expression patterns" value="baseline and differential"/>
</dbReference>
<dbReference type="GO" id="GO:0005768">
    <property type="term" value="C:endosome"/>
    <property type="evidence" value="ECO:0007005"/>
    <property type="project" value="TAIR"/>
</dbReference>
<dbReference type="GO" id="GO:0010008">
    <property type="term" value="C:endosome membrane"/>
    <property type="evidence" value="ECO:0007669"/>
    <property type="project" value="UniProtKB-SubCell"/>
</dbReference>
<dbReference type="GO" id="GO:0005794">
    <property type="term" value="C:Golgi apparatus"/>
    <property type="evidence" value="ECO:0007005"/>
    <property type="project" value="TAIR"/>
</dbReference>
<dbReference type="GO" id="GO:0000139">
    <property type="term" value="C:Golgi membrane"/>
    <property type="evidence" value="ECO:0007669"/>
    <property type="project" value="UniProtKB-SubCell"/>
</dbReference>
<dbReference type="GO" id="GO:0000325">
    <property type="term" value="C:plant-type vacuole"/>
    <property type="evidence" value="ECO:0007005"/>
    <property type="project" value="TAIR"/>
</dbReference>
<dbReference type="GO" id="GO:0009506">
    <property type="term" value="C:plasmodesma"/>
    <property type="evidence" value="ECO:0007005"/>
    <property type="project" value="TAIR"/>
</dbReference>
<dbReference type="GO" id="GO:0005802">
    <property type="term" value="C:trans-Golgi network"/>
    <property type="evidence" value="ECO:0007005"/>
    <property type="project" value="TAIR"/>
</dbReference>
<dbReference type="GO" id="GO:0005773">
    <property type="term" value="C:vacuole"/>
    <property type="evidence" value="ECO:0007005"/>
    <property type="project" value="TAIR"/>
</dbReference>
<dbReference type="InterPro" id="IPR004240">
    <property type="entry name" value="EMP70"/>
</dbReference>
<dbReference type="PANTHER" id="PTHR10766:SF163">
    <property type="entry name" value="TRANSMEMBRANE 9 SUPERFAMILY MEMBER 12"/>
    <property type="match status" value="1"/>
</dbReference>
<dbReference type="PANTHER" id="PTHR10766">
    <property type="entry name" value="TRANSMEMBRANE 9 SUPERFAMILY PROTEIN"/>
    <property type="match status" value="1"/>
</dbReference>
<dbReference type="Pfam" id="PF02990">
    <property type="entry name" value="EMP70"/>
    <property type="match status" value="1"/>
</dbReference>